<accession>Q3A6P8</accession>
<feature type="chain" id="PRO_0000237075" description="Small ribosomal subunit protein uS10">
    <location>
        <begin position="1"/>
        <end position="102"/>
    </location>
</feature>
<reference key="1">
    <citation type="submission" date="2005-10" db="EMBL/GenBank/DDBJ databases">
        <title>Complete sequence of Pelobacter carbinolicus DSM 2380.</title>
        <authorList>
            <person name="Copeland A."/>
            <person name="Lucas S."/>
            <person name="Lapidus A."/>
            <person name="Barry K."/>
            <person name="Detter J.C."/>
            <person name="Glavina T."/>
            <person name="Hammon N."/>
            <person name="Israni S."/>
            <person name="Pitluck S."/>
            <person name="Chertkov O."/>
            <person name="Schmutz J."/>
            <person name="Larimer F."/>
            <person name="Land M."/>
            <person name="Kyrpides N."/>
            <person name="Ivanova N."/>
            <person name="Richardson P."/>
        </authorList>
    </citation>
    <scope>NUCLEOTIDE SEQUENCE [LARGE SCALE GENOMIC DNA]</scope>
    <source>
        <strain>DSM 2380 / NBRC 103641 / GraBd1</strain>
    </source>
</reference>
<gene>
    <name evidence="1" type="primary">rpsJ</name>
    <name type="ordered locus">Pcar_0700</name>
</gene>
<proteinExistence type="inferred from homology"/>
<evidence type="ECO:0000255" key="1">
    <source>
        <dbReference type="HAMAP-Rule" id="MF_00508"/>
    </source>
</evidence>
<evidence type="ECO:0000305" key="2"/>
<protein>
    <recommendedName>
        <fullName evidence="1">Small ribosomal subunit protein uS10</fullName>
    </recommendedName>
    <alternativeName>
        <fullName evidence="2">30S ribosomal protein S10</fullName>
    </alternativeName>
</protein>
<keyword id="KW-1185">Reference proteome</keyword>
<keyword id="KW-0687">Ribonucleoprotein</keyword>
<keyword id="KW-0689">Ribosomal protein</keyword>
<name>RS10_SYNC1</name>
<comment type="function">
    <text evidence="1">Involved in the binding of tRNA to the ribosomes.</text>
</comment>
<comment type="subunit">
    <text evidence="1">Part of the 30S ribosomal subunit.</text>
</comment>
<comment type="similarity">
    <text evidence="1">Belongs to the universal ribosomal protein uS10 family.</text>
</comment>
<sequence length="102" mass="11617">MQSQKIRIRLKAYDHKLLDLSVNEIVDTAKRTGARVAGPIPLPTIINKYCVLRGPHVDKKSREQFEMRTHKRLLDIVEPTQQTVDALMKLDLSAGVDVEIKL</sequence>
<organism>
    <name type="scientific">Syntrophotalea carbinolica (strain DSM 2380 / NBRC 103641 / GraBd1)</name>
    <name type="common">Pelobacter carbinolicus</name>
    <dbReference type="NCBI Taxonomy" id="338963"/>
    <lineage>
        <taxon>Bacteria</taxon>
        <taxon>Pseudomonadati</taxon>
        <taxon>Thermodesulfobacteriota</taxon>
        <taxon>Desulfuromonadia</taxon>
        <taxon>Desulfuromonadales</taxon>
        <taxon>Syntrophotaleaceae</taxon>
        <taxon>Syntrophotalea</taxon>
    </lineage>
</organism>
<dbReference type="EMBL" id="CP000142">
    <property type="protein sequence ID" value="ABA87959.1"/>
    <property type="molecule type" value="Genomic_DNA"/>
</dbReference>
<dbReference type="RefSeq" id="WP_011340402.1">
    <property type="nucleotide sequence ID" value="NC_007498.2"/>
</dbReference>
<dbReference type="SMR" id="Q3A6P8"/>
<dbReference type="STRING" id="338963.Pcar_0700"/>
<dbReference type="KEGG" id="pca:Pcar_0700"/>
<dbReference type="eggNOG" id="COG0051">
    <property type="taxonomic scope" value="Bacteria"/>
</dbReference>
<dbReference type="HOGENOM" id="CLU_122625_1_3_7"/>
<dbReference type="OrthoDB" id="9804464at2"/>
<dbReference type="Proteomes" id="UP000002534">
    <property type="component" value="Chromosome"/>
</dbReference>
<dbReference type="GO" id="GO:1990904">
    <property type="term" value="C:ribonucleoprotein complex"/>
    <property type="evidence" value="ECO:0007669"/>
    <property type="project" value="UniProtKB-KW"/>
</dbReference>
<dbReference type="GO" id="GO:0005840">
    <property type="term" value="C:ribosome"/>
    <property type="evidence" value="ECO:0007669"/>
    <property type="project" value="UniProtKB-KW"/>
</dbReference>
<dbReference type="GO" id="GO:0003735">
    <property type="term" value="F:structural constituent of ribosome"/>
    <property type="evidence" value="ECO:0007669"/>
    <property type="project" value="InterPro"/>
</dbReference>
<dbReference type="GO" id="GO:0000049">
    <property type="term" value="F:tRNA binding"/>
    <property type="evidence" value="ECO:0007669"/>
    <property type="project" value="UniProtKB-UniRule"/>
</dbReference>
<dbReference type="GO" id="GO:0006412">
    <property type="term" value="P:translation"/>
    <property type="evidence" value="ECO:0007669"/>
    <property type="project" value="UniProtKB-UniRule"/>
</dbReference>
<dbReference type="FunFam" id="3.30.70.600:FF:000001">
    <property type="entry name" value="30S ribosomal protein S10"/>
    <property type="match status" value="1"/>
</dbReference>
<dbReference type="Gene3D" id="3.30.70.600">
    <property type="entry name" value="Ribosomal protein S10 domain"/>
    <property type="match status" value="1"/>
</dbReference>
<dbReference type="HAMAP" id="MF_00508">
    <property type="entry name" value="Ribosomal_uS10"/>
    <property type="match status" value="1"/>
</dbReference>
<dbReference type="InterPro" id="IPR001848">
    <property type="entry name" value="Ribosomal_uS10"/>
</dbReference>
<dbReference type="InterPro" id="IPR018268">
    <property type="entry name" value="Ribosomal_uS10_CS"/>
</dbReference>
<dbReference type="InterPro" id="IPR027486">
    <property type="entry name" value="Ribosomal_uS10_dom"/>
</dbReference>
<dbReference type="InterPro" id="IPR036838">
    <property type="entry name" value="Ribosomal_uS10_dom_sf"/>
</dbReference>
<dbReference type="NCBIfam" id="NF001861">
    <property type="entry name" value="PRK00596.1"/>
    <property type="match status" value="1"/>
</dbReference>
<dbReference type="NCBIfam" id="TIGR01049">
    <property type="entry name" value="rpsJ_bact"/>
    <property type="match status" value="1"/>
</dbReference>
<dbReference type="PANTHER" id="PTHR11700">
    <property type="entry name" value="30S RIBOSOMAL PROTEIN S10 FAMILY MEMBER"/>
    <property type="match status" value="1"/>
</dbReference>
<dbReference type="Pfam" id="PF00338">
    <property type="entry name" value="Ribosomal_S10"/>
    <property type="match status" value="1"/>
</dbReference>
<dbReference type="PRINTS" id="PR00971">
    <property type="entry name" value="RIBOSOMALS10"/>
</dbReference>
<dbReference type="SMART" id="SM01403">
    <property type="entry name" value="Ribosomal_S10"/>
    <property type="match status" value="1"/>
</dbReference>
<dbReference type="SUPFAM" id="SSF54999">
    <property type="entry name" value="Ribosomal protein S10"/>
    <property type="match status" value="1"/>
</dbReference>
<dbReference type="PROSITE" id="PS00361">
    <property type="entry name" value="RIBOSOMAL_S10"/>
    <property type="match status" value="1"/>
</dbReference>